<sequence>MARMGLAGAAGRWWGLALGLTAFFLPGTHTQVVQVNDSMYGFIGTDVVLHCSFANPLPSVKITQVTWQKASNGSKQNMAIYNPTMGVSVLPPYEKRVEFLRPSFIDGTIRLSGLELEDEGMYICEFATFPTGNRESQLNLTVMAKPTNWIEGTRAVLRARKGQDDKVLVATCTSANGKPPSAVSWETRLKGEAEYQEIRNPNGTVTVISRYRLVPSREAHRQSLACIVNYHLDRFRESLTLNVQYEPEVTIEGFDGNWYLQRTDVKLTCKADANPPATEYHWTTLNGSLPKGVEAQNRTLFFRGPITYSLAGTYICEATNPIGTRSGQVEVNITEFPYTPTPEHGRRAGQMPTAIIGGVAGSVLLVLIVVGGIIVALRRRRHTFKGDYSTKKHVYGNGYSKAGIPQHHPPMAQNLQYPDDSDDEKKAGPLGGSSYEEEEEEEGGGGGERKVGGPHPKYDEDAKRPYFTVDEAEARQDGYGDRTLGYQYDPEQLDLAENMVSQNDGSFISKKEWYV</sequence>
<dbReference type="EMBL" id="AF239762">
    <property type="protein sequence ID" value="AAF60333.1"/>
    <property type="molecule type" value="mRNA"/>
</dbReference>
<dbReference type="EMBL" id="AF270977">
    <property type="protein sequence ID" value="AAF76195.1"/>
    <property type="molecule type" value="mRNA"/>
</dbReference>
<dbReference type="EMBL" id="AF297665">
    <property type="protein sequence ID" value="AAG22808.1"/>
    <property type="molecule type" value="mRNA"/>
</dbReference>
<dbReference type="EMBL" id="BC060694">
    <property type="protein sequence ID" value="AAH60694.1"/>
    <property type="molecule type" value="mRNA"/>
</dbReference>
<dbReference type="CCDS" id="CCDS23092.1"/>
<dbReference type="RefSeq" id="NP_067399.2">
    <property type="nucleotide sequence ID" value="NM_021424.2"/>
</dbReference>
<dbReference type="PDB" id="2L7J">
    <property type="method" value="NMR"/>
    <property type="chains" value="A=241-334"/>
</dbReference>
<dbReference type="PDB" id="5B21">
    <property type="method" value="X-ray"/>
    <property type="resolution" value="2.24 A"/>
    <property type="chains" value="A/B=31-144"/>
</dbReference>
<dbReference type="PDBsum" id="2L7J"/>
<dbReference type="PDBsum" id="5B21"/>
<dbReference type="BMRB" id="Q9JKF6"/>
<dbReference type="SMR" id="Q9JKF6"/>
<dbReference type="BioGRID" id="208408">
    <property type="interactions" value="4"/>
</dbReference>
<dbReference type="DIP" id="DIP-41728N"/>
<dbReference type="FunCoup" id="Q9JKF6">
    <property type="interactions" value="563"/>
</dbReference>
<dbReference type="MINT" id="Q9JKF6"/>
<dbReference type="STRING" id="10090.ENSMUSP00000034510"/>
<dbReference type="GlyConnect" id="2528">
    <property type="glycosylation" value="15 N-Linked glycans (1 site)"/>
</dbReference>
<dbReference type="GlyCosmos" id="Q9JKF6">
    <property type="glycosylation" value="7 sites, 15 glycans"/>
</dbReference>
<dbReference type="GlyGen" id="Q9JKF6">
    <property type="glycosylation" value="9 sites, 19 N-linked glycans (5 sites), 1 O-linked glycan (1 site)"/>
</dbReference>
<dbReference type="iPTMnet" id="Q9JKF6"/>
<dbReference type="PhosphoSitePlus" id="Q9JKF6"/>
<dbReference type="SwissPalm" id="Q9JKF6"/>
<dbReference type="CPTAC" id="non-CPTAC-3660"/>
<dbReference type="jPOST" id="Q9JKF6"/>
<dbReference type="PaxDb" id="10090-ENSMUSP00000034510"/>
<dbReference type="PeptideAtlas" id="Q9JKF6"/>
<dbReference type="ProteomicsDB" id="252802"/>
<dbReference type="Pumba" id="Q9JKF6"/>
<dbReference type="Antibodypedia" id="4247">
    <property type="antibodies" value="445 antibodies from 37 providers"/>
</dbReference>
<dbReference type="DNASU" id="58235"/>
<dbReference type="Ensembl" id="ENSMUST00000034510.9">
    <property type="protein sequence ID" value="ENSMUSP00000034510.8"/>
    <property type="gene ID" value="ENSMUSG00000032012.10"/>
</dbReference>
<dbReference type="GeneID" id="58235"/>
<dbReference type="KEGG" id="mmu:58235"/>
<dbReference type="UCSC" id="uc009pbj.1">
    <property type="organism name" value="mouse"/>
</dbReference>
<dbReference type="AGR" id="MGI:1926483"/>
<dbReference type="CTD" id="5818"/>
<dbReference type="MGI" id="MGI:1926483">
    <property type="gene designation" value="Nectin1"/>
</dbReference>
<dbReference type="VEuPathDB" id="HostDB:ENSMUSG00000032012"/>
<dbReference type="eggNOG" id="ENOG502QVRJ">
    <property type="taxonomic scope" value="Eukaryota"/>
</dbReference>
<dbReference type="GeneTree" id="ENSGT00940000156933"/>
<dbReference type="HOGENOM" id="CLU_029618_3_1_1"/>
<dbReference type="InParanoid" id="Q9JKF6"/>
<dbReference type="OrthoDB" id="8718740at2759"/>
<dbReference type="PhylomeDB" id="Q9JKF6"/>
<dbReference type="TreeFam" id="TF331051"/>
<dbReference type="Reactome" id="R-MMU-418990">
    <property type="pathway name" value="Adherens junctions interactions"/>
</dbReference>
<dbReference type="Reactome" id="R-MMU-420597">
    <property type="pathway name" value="Nectin/Necl trans heterodimerization"/>
</dbReference>
<dbReference type="BioGRID-ORCS" id="58235">
    <property type="hits" value="3 hits in 81 CRISPR screens"/>
</dbReference>
<dbReference type="ChiTaRS" id="Nectin1">
    <property type="organism name" value="mouse"/>
</dbReference>
<dbReference type="EvolutionaryTrace" id="Q9JKF6"/>
<dbReference type="PRO" id="PR:Q9JKF6"/>
<dbReference type="Proteomes" id="UP000000589">
    <property type="component" value="Chromosome 9"/>
</dbReference>
<dbReference type="RNAct" id="Q9JKF6">
    <property type="molecule type" value="protein"/>
</dbReference>
<dbReference type="Bgee" id="ENSMUSG00000032012">
    <property type="expression patterns" value="Expressed in lip and 142 other cell types or tissues"/>
</dbReference>
<dbReference type="ExpressionAtlas" id="Q9JKF6">
    <property type="expression patterns" value="baseline and differential"/>
</dbReference>
<dbReference type="GO" id="GO:0005912">
    <property type="term" value="C:adherens junction"/>
    <property type="evidence" value="ECO:0000314"/>
    <property type="project" value="MGI"/>
</dbReference>
<dbReference type="GO" id="GO:0043296">
    <property type="term" value="C:apical junction complex"/>
    <property type="evidence" value="ECO:0000314"/>
    <property type="project" value="MGI"/>
</dbReference>
<dbReference type="GO" id="GO:0044291">
    <property type="term" value="C:cell-cell contact zone"/>
    <property type="evidence" value="ECO:0000314"/>
    <property type="project" value="MGI"/>
</dbReference>
<dbReference type="GO" id="GO:0030425">
    <property type="term" value="C:dendrite"/>
    <property type="evidence" value="ECO:0007669"/>
    <property type="project" value="Ensembl"/>
</dbReference>
<dbReference type="GO" id="GO:0032584">
    <property type="term" value="C:growth cone membrane"/>
    <property type="evidence" value="ECO:0007669"/>
    <property type="project" value="Ensembl"/>
</dbReference>
<dbReference type="GO" id="GO:0098686">
    <property type="term" value="C:hippocampal mossy fiber to CA3 synapse"/>
    <property type="evidence" value="ECO:0000314"/>
    <property type="project" value="SynGO"/>
</dbReference>
<dbReference type="GO" id="GO:0016020">
    <property type="term" value="C:membrane"/>
    <property type="evidence" value="ECO:0000266"/>
    <property type="project" value="MGI"/>
</dbReference>
<dbReference type="GO" id="GO:0005886">
    <property type="term" value="C:plasma membrane"/>
    <property type="evidence" value="ECO:0000314"/>
    <property type="project" value="UniProtKB"/>
</dbReference>
<dbReference type="GO" id="GO:0048787">
    <property type="term" value="C:presynaptic active zone membrane"/>
    <property type="evidence" value="ECO:0000314"/>
    <property type="project" value="SynGO"/>
</dbReference>
<dbReference type="GO" id="GO:0030246">
    <property type="term" value="F:carbohydrate binding"/>
    <property type="evidence" value="ECO:0007669"/>
    <property type="project" value="Ensembl"/>
</dbReference>
<dbReference type="GO" id="GO:0098631">
    <property type="term" value="F:cell adhesion mediator activity"/>
    <property type="evidence" value="ECO:0000314"/>
    <property type="project" value="UniProtKB"/>
</dbReference>
<dbReference type="GO" id="GO:0042803">
    <property type="term" value="F:protein homodimerization activity"/>
    <property type="evidence" value="ECO:0000353"/>
    <property type="project" value="HGNC-UCL"/>
</dbReference>
<dbReference type="GO" id="GO:0044877">
    <property type="term" value="F:protein-containing complex binding"/>
    <property type="evidence" value="ECO:0007669"/>
    <property type="project" value="Ensembl"/>
</dbReference>
<dbReference type="GO" id="GO:0038023">
    <property type="term" value="F:signaling receptor activity"/>
    <property type="evidence" value="ECO:0000314"/>
    <property type="project" value="MGI"/>
</dbReference>
<dbReference type="GO" id="GO:0046790">
    <property type="term" value="F:virion binding"/>
    <property type="evidence" value="ECO:0007669"/>
    <property type="project" value="Ensembl"/>
</dbReference>
<dbReference type="GO" id="GO:0001618">
    <property type="term" value="F:virus receptor activity"/>
    <property type="evidence" value="ECO:0000314"/>
    <property type="project" value="UniProtKB"/>
</dbReference>
<dbReference type="GO" id="GO:0007411">
    <property type="term" value="P:axon guidance"/>
    <property type="evidence" value="ECO:0007669"/>
    <property type="project" value="Ensembl"/>
</dbReference>
<dbReference type="GO" id="GO:0048593">
    <property type="term" value="P:camera-type eye morphogenesis"/>
    <property type="evidence" value="ECO:0000315"/>
    <property type="project" value="MGI"/>
</dbReference>
<dbReference type="GO" id="GO:0098609">
    <property type="term" value="P:cell-cell adhesion"/>
    <property type="evidence" value="ECO:0000315"/>
    <property type="project" value="MGI"/>
</dbReference>
<dbReference type="GO" id="GO:0090103">
    <property type="term" value="P:cochlea morphogenesis"/>
    <property type="evidence" value="ECO:0000314"/>
    <property type="project" value="UniProtKB"/>
</dbReference>
<dbReference type="GO" id="GO:0002934">
    <property type="term" value="P:desmosome organization"/>
    <property type="evidence" value="ECO:0000315"/>
    <property type="project" value="MGI"/>
</dbReference>
<dbReference type="GO" id="GO:0070166">
    <property type="term" value="P:enamel mineralization"/>
    <property type="evidence" value="ECO:0000315"/>
    <property type="project" value="MGI"/>
</dbReference>
<dbReference type="GO" id="GO:0007157">
    <property type="term" value="P:heterophilic cell-cell adhesion via plasma membrane cell adhesion molecules"/>
    <property type="evidence" value="ECO:0000314"/>
    <property type="project" value="UniProtKB"/>
</dbReference>
<dbReference type="GO" id="GO:0007156">
    <property type="term" value="P:homophilic cell adhesion via plasma membrane adhesion molecules"/>
    <property type="evidence" value="ECO:0000314"/>
    <property type="project" value="HGNC-UCL"/>
</dbReference>
<dbReference type="GO" id="GO:0006826">
    <property type="term" value="P:iron ion transport"/>
    <property type="evidence" value="ECO:0000315"/>
    <property type="project" value="MGI"/>
</dbReference>
<dbReference type="GO" id="GO:0002089">
    <property type="term" value="P:lens morphogenesis in camera-type eye"/>
    <property type="evidence" value="ECO:0000315"/>
    <property type="project" value="MGI"/>
</dbReference>
<dbReference type="GO" id="GO:1902414">
    <property type="term" value="P:protein localization to cell junction"/>
    <property type="evidence" value="ECO:0000314"/>
    <property type="project" value="MGI"/>
</dbReference>
<dbReference type="GO" id="GO:0051963">
    <property type="term" value="P:regulation of synapse assembly"/>
    <property type="evidence" value="ECO:0007669"/>
    <property type="project" value="Ensembl"/>
</dbReference>
<dbReference type="GO" id="GO:0060041">
    <property type="term" value="P:retina development in camera-type eye"/>
    <property type="evidence" value="ECO:0000315"/>
    <property type="project" value="MGI"/>
</dbReference>
<dbReference type="CDD" id="cd05890">
    <property type="entry name" value="IgC1_2_Nectin-1_like"/>
    <property type="match status" value="1"/>
</dbReference>
<dbReference type="CDD" id="cd05886">
    <property type="entry name" value="IgV_1_Nectin-1_like"/>
    <property type="match status" value="1"/>
</dbReference>
<dbReference type="CDD" id="cd12087">
    <property type="entry name" value="TM_EGFR-like"/>
    <property type="match status" value="1"/>
</dbReference>
<dbReference type="FunFam" id="2.60.40.10:FF:000268">
    <property type="entry name" value="Nectin cell adhesion molecule 1"/>
    <property type="match status" value="1"/>
</dbReference>
<dbReference type="FunFam" id="2.60.40.10:FF:000304">
    <property type="entry name" value="Nectin cell adhesion molecule 1"/>
    <property type="match status" value="1"/>
</dbReference>
<dbReference type="FunFam" id="2.60.40.10:FF:000427">
    <property type="entry name" value="Nectin cell adhesion molecule 1"/>
    <property type="match status" value="1"/>
</dbReference>
<dbReference type="Gene3D" id="2.60.40.10">
    <property type="entry name" value="Immunoglobulins"/>
    <property type="match status" value="3"/>
</dbReference>
<dbReference type="InterPro" id="IPR013162">
    <property type="entry name" value="CD80_C2-set"/>
</dbReference>
<dbReference type="InterPro" id="IPR007110">
    <property type="entry name" value="Ig-like_dom"/>
</dbReference>
<dbReference type="InterPro" id="IPR036179">
    <property type="entry name" value="Ig-like_dom_sf"/>
</dbReference>
<dbReference type="InterPro" id="IPR013783">
    <property type="entry name" value="Ig-like_fold"/>
</dbReference>
<dbReference type="InterPro" id="IPR003599">
    <property type="entry name" value="Ig_sub"/>
</dbReference>
<dbReference type="InterPro" id="IPR003598">
    <property type="entry name" value="Ig_sub2"/>
</dbReference>
<dbReference type="InterPro" id="IPR013106">
    <property type="entry name" value="Ig_V-set"/>
</dbReference>
<dbReference type="InterPro" id="IPR041850">
    <property type="entry name" value="Nectin-1_Ig2"/>
</dbReference>
<dbReference type="InterPro" id="IPR041849">
    <property type="entry name" value="Nectin-1_IgV1"/>
</dbReference>
<dbReference type="InterPro" id="IPR051427">
    <property type="entry name" value="Nectin/Nectin-like"/>
</dbReference>
<dbReference type="PANTHER" id="PTHR23277:SF69">
    <property type="entry name" value="NECTIN-1"/>
    <property type="match status" value="1"/>
</dbReference>
<dbReference type="PANTHER" id="PTHR23277">
    <property type="entry name" value="NECTIN-RELATED"/>
    <property type="match status" value="1"/>
</dbReference>
<dbReference type="Pfam" id="PF08205">
    <property type="entry name" value="C2-set_2"/>
    <property type="match status" value="1"/>
</dbReference>
<dbReference type="Pfam" id="PF13927">
    <property type="entry name" value="Ig_3"/>
    <property type="match status" value="1"/>
</dbReference>
<dbReference type="Pfam" id="PF07686">
    <property type="entry name" value="V-set"/>
    <property type="match status" value="1"/>
</dbReference>
<dbReference type="SMART" id="SM00409">
    <property type="entry name" value="IG"/>
    <property type="match status" value="2"/>
</dbReference>
<dbReference type="SMART" id="SM00408">
    <property type="entry name" value="IGc2"/>
    <property type="match status" value="2"/>
</dbReference>
<dbReference type="SMART" id="SM00406">
    <property type="entry name" value="IGv"/>
    <property type="match status" value="1"/>
</dbReference>
<dbReference type="SUPFAM" id="SSF48726">
    <property type="entry name" value="Immunoglobulin"/>
    <property type="match status" value="3"/>
</dbReference>
<dbReference type="PROSITE" id="PS50835">
    <property type="entry name" value="IG_LIKE"/>
    <property type="match status" value="2"/>
</dbReference>
<organism>
    <name type="scientific">Mus musculus</name>
    <name type="common">Mouse</name>
    <dbReference type="NCBI Taxonomy" id="10090"/>
    <lineage>
        <taxon>Eukaryota</taxon>
        <taxon>Metazoa</taxon>
        <taxon>Chordata</taxon>
        <taxon>Craniata</taxon>
        <taxon>Vertebrata</taxon>
        <taxon>Euteleostomi</taxon>
        <taxon>Mammalia</taxon>
        <taxon>Eutheria</taxon>
        <taxon>Euarchontoglires</taxon>
        <taxon>Glires</taxon>
        <taxon>Rodentia</taxon>
        <taxon>Myomorpha</taxon>
        <taxon>Muroidea</taxon>
        <taxon>Muridae</taxon>
        <taxon>Murinae</taxon>
        <taxon>Mus</taxon>
        <taxon>Mus</taxon>
    </lineage>
</organism>
<evidence type="ECO:0000250" key="1">
    <source>
        <dbReference type="UniProtKB" id="Q15223"/>
    </source>
</evidence>
<evidence type="ECO:0000255" key="2"/>
<evidence type="ECO:0000255" key="3">
    <source>
        <dbReference type="PROSITE-ProRule" id="PRU00114"/>
    </source>
</evidence>
<evidence type="ECO:0000256" key="4">
    <source>
        <dbReference type="SAM" id="MobiDB-lite"/>
    </source>
</evidence>
<evidence type="ECO:0000269" key="5">
    <source>
    </source>
</evidence>
<evidence type="ECO:0000269" key="6">
    <source>
    </source>
</evidence>
<evidence type="ECO:0000269" key="7">
    <source>
    </source>
</evidence>
<evidence type="ECO:0000269" key="8">
    <source>
    </source>
</evidence>
<evidence type="ECO:0000269" key="9">
    <source>
    </source>
</evidence>
<evidence type="ECO:0000269" key="10">
    <source>
    </source>
</evidence>
<evidence type="ECO:0000269" key="11">
    <source>
    </source>
</evidence>
<evidence type="ECO:0000269" key="12">
    <source>
    </source>
</evidence>
<evidence type="ECO:0000269" key="13">
    <source>
    </source>
</evidence>
<evidence type="ECO:0000269" key="14">
    <source>
    </source>
</evidence>
<evidence type="ECO:0000303" key="15">
    <source>
    </source>
</evidence>
<evidence type="ECO:0000305" key="16"/>
<evidence type="ECO:0007744" key="17">
    <source>
    </source>
</evidence>
<evidence type="ECO:0007744" key="18">
    <source>
    </source>
</evidence>
<evidence type="ECO:0007744" key="19">
    <source>
    </source>
</evidence>
<evidence type="ECO:0007829" key="20">
    <source>
        <dbReference type="PDB" id="2L7J"/>
    </source>
</evidence>
<evidence type="ECO:0007829" key="21">
    <source>
        <dbReference type="PDB" id="5B21"/>
    </source>
</evidence>
<accession>Q9JKF6</accession>
<accession>Q6P9M9</accession>
<accession>Q9ERL5</accession>
<accession>Q9JI17</accession>
<keyword id="KW-0002">3D-structure</keyword>
<keyword id="KW-0130">Cell adhesion</keyword>
<keyword id="KW-0965">Cell junction</keyword>
<keyword id="KW-1003">Cell membrane</keyword>
<keyword id="KW-0966">Cell projection</keyword>
<keyword id="KW-1015">Disulfide bond</keyword>
<keyword id="KW-0325">Glycoprotein</keyword>
<keyword id="KW-1183">Host cell receptor for virus entry</keyword>
<keyword id="KW-0945">Host-virus interaction</keyword>
<keyword id="KW-0393">Immunoglobulin domain</keyword>
<keyword id="KW-0472">Membrane</keyword>
<keyword id="KW-0597">Phosphoprotein</keyword>
<keyword id="KW-0675">Receptor</keyword>
<keyword id="KW-1185">Reference proteome</keyword>
<keyword id="KW-0677">Repeat</keyword>
<keyword id="KW-0732">Signal</keyword>
<keyword id="KW-0770">Synapse</keyword>
<keyword id="KW-0812">Transmembrane</keyword>
<keyword id="KW-1133">Transmembrane helix</keyword>
<protein>
    <recommendedName>
        <fullName evidence="15">Nectin-1</fullName>
    </recommendedName>
    <alternativeName>
        <fullName>Herpes virus entry mediator C</fullName>
        <shortName>Herpesvirus entry mediator C</shortName>
        <shortName>HveC</shortName>
    </alternativeName>
    <alternativeName>
        <fullName evidence="1">Nectin cell adhesion molecule 1</fullName>
    </alternativeName>
    <alternativeName>
        <fullName>Poliovirus receptor-related protein 1</fullName>
    </alternativeName>
    <cdAntigenName>CD111</cdAntigenName>
</protein>
<comment type="function">
    <text evidence="6 7 9 12 13">Cell adhesion molecule that promotes cell-cell contacts and plays important roles in the development of the nervous system (PubMed:11827984, PubMed:15328010, PubMed:18703497, PubMed:21798896, PubMed:22955284). Acts by forming homophilic or heterophilic trans-dimers (PubMed:11827984). Heterophilic interactions have been detected between NECTIN1 and NECTIN3 and between NECTIN1 and NECTIN4 (PubMed:11827984, PubMed:21798896). Involved in axon guidance by promoting contacts between the commissural axons and the floor plate cells (PubMed:15328010). Involved in synaptogegesis (PubMed:11827984). Has some neurite outgrowth-promoting activity (PubMed:22955284). Promotes formation of checkerboard-like cellular pattern of hair cells and supporting cells in the auditory epithelium via heterophilic interaction with NECTIN3: NECTIN1 is present in the membrane of hair cells and associates with NECTIN3 on supporting cells, thereby mediating heterotypic adhesion between these two cell types (PubMed:21798896). Required for enamel mineralization (PubMed:18703497).</text>
</comment>
<comment type="function">
    <text evidence="14">(Microbial infection) Acts as a receptor for pseudorabies virus/PRV.</text>
</comment>
<comment type="subunit">
    <text evidence="1 5 6 12 13">Cis- and trans-homodimer (PubMed:11827984). Can form trans-heterodimers with NECTIN3 and with NECTIN4 (PubMed:10744716, PubMed:11827984, PubMed:21798896). Interaction between NECTIN1 and NECTIN3 on the pre- and postsynaptic sites, respectively, initiates the formation of puncta adherentia junctions between axons and dendrites (PubMed:10744716). Interacts (via cytoplasmic domain) with AFDN (via PDZ domain); this interaction recruits NECTIN1 to cadherin-based adherens junctions and provides a connection with the actin cytoskeleton (By similarity). Interacts with integrin alphaV/beta3 (By similarity). Interacts (via Ig-like C2-type domain 2) with FGFR1, FGFR2 and FGFR3 (PubMed:22955284).</text>
</comment>
<comment type="subunit">
    <text evidence="14">(Microbial infection) Interacts with herpes pseudorabies virus/PRV envelope glycoprotein D.</text>
</comment>
<comment type="subcellular location">
    <subcellularLocation>
        <location evidence="6 12">Cell membrane</location>
        <topology evidence="2">Single-pass type I membrane protein</topology>
    </subcellularLocation>
    <subcellularLocation>
        <location evidence="7 8">Cell junction</location>
        <location evidence="7 8">Adherens junction</location>
    </subcellularLocation>
    <subcellularLocation>
        <location evidence="6">Presynaptic cell membrane</location>
        <topology evidence="2">Single-pass type I membrane protein</topology>
    </subcellularLocation>
    <text evidence="12">In the auditory epithelium, specificaly localizes to the apical side of the lateral membranes of hair cells.</text>
</comment>
<comment type="domain">
    <text evidence="1 13">The Ig-like V-type domain is involved in homophilic interaction in cis, a prerequisite for cell adhesion (By similarity). Ig-like C2-type 2 mediates neurite outgrowth through binding, induction of phosphorylation, and activation of FGFR (PubMed:22955284).</text>
</comment>
<comment type="disruption phenotype">
    <text evidence="8 9 12">Mice are viable and fertile but display microphthalmia (PubMed:15728677). Microphthalmia is accompanied by a separation of the apex-apex contact between the pigment and non-pigment cell layers of the ciliary epithelia (PubMed:15728677). Mice also show abnormal incisor teeth, due to hypomineralized enamel (PubMed:18703497). In the auditory epithelium, impaired formation of the checkerboard-like cellular pattern of hair cells and supporting cells, due to aberrant attachment between hair cells (PubMed:21798896).</text>
</comment>
<comment type="similarity">
    <text evidence="16">Belongs to the nectin family.</text>
</comment>
<proteinExistence type="evidence at protein level"/>
<reference key="1">
    <citation type="journal article" date="2000" name="Proc. Natl. Acad. Sci. U.S.A.">
        <title>The murine homolog of human nectin1 delta serves as a species nonspecific mediator for entry of human and animal alpha herpesviruses in a pathway independent of detectable binding to gD.</title>
        <authorList>
            <person name="Menotti L."/>
            <person name="Lopez M."/>
            <person name="Avitabile E."/>
            <person name="Stefan A."/>
            <person name="Cocchi F."/>
            <person name="Adelaide J."/>
            <person name="Lecocq E."/>
            <person name="Dubreuil P."/>
            <person name="Campadelli-Fiume G."/>
        </authorList>
    </citation>
    <scope>NUCLEOTIDE SEQUENCE [MRNA]</scope>
</reference>
<reference key="2">
    <citation type="journal article" date="2000" name="J. Virol.">
        <title>Striking similarity of murine nectin-1alpha to human nectin-1alpha (HveC) in sequence and activity as a glycoprotein D receptor for alphaherpesvirus entry.</title>
        <authorList>
            <person name="Shukla D."/>
            <person name="Dal Canto M.C."/>
            <person name="Rowe C.L."/>
            <person name="Spear P.G."/>
        </authorList>
    </citation>
    <scope>NUCLEOTIDE SEQUENCE [MRNA]</scope>
</reference>
<reference key="3">
    <citation type="submission" date="2000-08" db="EMBL/GenBank/DDBJ databases">
        <title>Mouse nectin-1 (mPRR1), a herpesvirus receptor, is expressed in the floor plate during embryogenesis, suggesting a role in neural development.</title>
        <authorList>
            <person name="Zhan J."/>
            <person name="Wimmer E."/>
        </authorList>
    </citation>
    <scope>NUCLEOTIDE SEQUENCE [MRNA]</scope>
    <source>
        <strain>Swiss Webster</strain>
    </source>
</reference>
<reference key="4">
    <citation type="journal article" date="2004" name="Genome Res.">
        <title>The status, quality, and expansion of the NIH full-length cDNA project: the Mammalian Gene Collection (MGC).</title>
        <authorList>
            <consortium name="The MGC Project Team"/>
        </authorList>
    </citation>
    <scope>NUCLEOTIDE SEQUENCE [LARGE SCALE MRNA]</scope>
    <source>
        <strain>C57BL/6J</strain>
        <tissue>Brain</tissue>
    </source>
</reference>
<reference key="5">
    <citation type="journal article" date="2000" name="J. Biol. Chem.">
        <title>Nectin-3: a new member of immunoglobulin-like cell adhesion molecules that shows homophilic and heterophilic cell-cell adhesion activities.</title>
        <authorList>
            <person name="Satoh-Horikawa K."/>
            <person name="Nakanishi H."/>
            <person name="Takahashi K."/>
            <person name="Miyahara M."/>
            <person name="Nishimura M."/>
            <person name="Tachibana K."/>
            <person name="Mizoguchi A."/>
            <person name="Takai Y."/>
        </authorList>
    </citation>
    <scope>INTERACTION WITH NECTIN3</scope>
</reference>
<reference key="6">
    <citation type="journal article" date="2002" name="J. Cell Biol.">
        <title>Nectin: an adhesion molecule involved in formation of synapses.</title>
        <authorList>
            <person name="Mizoguchi A."/>
            <person name="Nakanishi H."/>
            <person name="Kimura K."/>
            <person name="Matsubara K."/>
            <person name="Ozaki-Kuroda K."/>
            <person name="Katata T."/>
            <person name="Honda T."/>
            <person name="Kiyohara Y."/>
            <person name="Heo K."/>
            <person name="Higashi M."/>
            <person name="Tsutsumi T."/>
            <person name="Sonoda S."/>
            <person name="Ide C."/>
            <person name="Takai Y."/>
        </authorList>
    </citation>
    <scope>FUNCTION</scope>
    <scope>SUBUNIT</scope>
    <scope>SUBCELLULAR LOCATION</scope>
</reference>
<reference key="7">
    <citation type="journal article" date="2004" name="Dev. Biol.">
        <title>Contacts between the commissural axons and the floor plate cells are mediated by nectins.</title>
        <authorList>
            <person name="Okabe N."/>
            <person name="Shimizu K."/>
            <person name="Ozaki-Kuroda K."/>
            <person name="Nakanishi H."/>
            <person name="Morimoto K."/>
            <person name="Takeuchi M."/>
            <person name="Katsumaru H."/>
            <person name="Murakami F."/>
            <person name="Takai Y."/>
        </authorList>
    </citation>
    <scope>FUNCTION</scope>
    <scope>SUBCELLULAR LOCATION</scope>
</reference>
<reference key="8">
    <citation type="journal article" date="2004" name="Mol. Cell. Proteomics">
        <title>Phosphoproteomic analysis of the developing mouse brain.</title>
        <authorList>
            <person name="Ballif B.A."/>
            <person name="Villen J."/>
            <person name="Beausoleil S.A."/>
            <person name="Schwartz D."/>
            <person name="Gygi S.P."/>
        </authorList>
    </citation>
    <scope>IDENTIFICATION BY MASS SPECTROMETRY [LARGE SCALE ANALYSIS]</scope>
    <source>
        <tissue>Embryonic brain</tissue>
    </source>
</reference>
<reference key="9">
    <citation type="journal article" date="2005" name="Development">
        <title>Roles of cell-adhesion molecules nectin 1 and nectin 3 in ciliary body development.</title>
        <authorList>
            <person name="Inagaki M."/>
            <person name="Irie K."/>
            <person name="Ishizaki H."/>
            <person name="Tanaka-Okamoto M."/>
            <person name="Morimoto K."/>
            <person name="Inoue E."/>
            <person name="Ohtsuka T."/>
            <person name="Miyoshi J."/>
            <person name="Takai Y."/>
        </authorList>
    </citation>
    <scope>SUBCELLULAR LOCATION</scope>
    <scope>DISRUPTION PHENOTYPE</scope>
</reference>
<reference key="10">
    <citation type="journal article" date="2007" name="Proc. Natl. Acad. Sci. U.S.A.">
        <title>Large-scale phosphorylation analysis of mouse liver.</title>
        <authorList>
            <person name="Villen J."/>
            <person name="Beausoleil S.A."/>
            <person name="Gerber S.A."/>
            <person name="Gygi S.P."/>
        </authorList>
    </citation>
    <scope>PHOSPHORYLATION [LARGE SCALE ANALYSIS] AT SER-433 AND SER-434</scope>
    <scope>IDENTIFICATION BY MASS SPECTROMETRY [LARGE SCALE ANALYSIS]</scope>
    <source>
        <tissue>Liver</tissue>
    </source>
</reference>
<reference key="11">
    <citation type="journal article" date="2008" name="Hum. Mol. Genet.">
        <title>The cell adhesion molecule nectin-1 is critical for normal enamel formation in mice.</title>
        <authorList>
            <person name="Barron M.J."/>
            <person name="Brookes S.J."/>
            <person name="Draper C.E."/>
            <person name="Garrod D."/>
            <person name="Kirkham J."/>
            <person name="Shore R.C."/>
            <person name="Dixon M.J."/>
        </authorList>
    </citation>
    <scope>FUNCTION</scope>
    <scope>DISRUPTION PHENOTYPE</scope>
</reference>
<reference key="12">
    <citation type="journal article" date="2009" name="Immunity">
        <title>The phagosomal proteome in interferon-gamma-activated macrophages.</title>
        <authorList>
            <person name="Trost M."/>
            <person name="English L."/>
            <person name="Lemieux S."/>
            <person name="Courcelles M."/>
            <person name="Desjardins M."/>
            <person name="Thibault P."/>
        </authorList>
    </citation>
    <scope>PHOSPHORYLATION [LARGE SCALE ANALYSIS] AT SER-421</scope>
    <scope>IDENTIFICATION BY MASS SPECTROMETRY [LARGE SCALE ANALYSIS]</scope>
</reference>
<reference key="13">
    <citation type="journal article" date="2009" name="Mol. Cell. Proteomics">
        <title>The mouse C2C12 myoblast cell surface N-linked glycoproteome: identification, glycosite occupancy, and membrane orientation.</title>
        <authorList>
            <person name="Gundry R.L."/>
            <person name="Raginski K."/>
            <person name="Tarasova Y."/>
            <person name="Tchernyshyov I."/>
            <person name="Bausch-Fluck D."/>
            <person name="Elliott S.T."/>
            <person name="Boheler K.R."/>
            <person name="Van Eyk J.E."/>
            <person name="Wollscheid B."/>
        </authorList>
    </citation>
    <scope>GLYCOSYLATION [LARGE SCALE ANALYSIS] AT ASN-202 AND ASN-286</scope>
    <source>
        <tissue>Myoblast</tissue>
    </source>
</reference>
<reference key="14">
    <citation type="journal article" date="2009" name="Nat. Biotechnol.">
        <title>Mass-spectrometric identification and relative quantification of N-linked cell surface glycoproteins.</title>
        <authorList>
            <person name="Wollscheid B."/>
            <person name="Bausch-Fluck D."/>
            <person name="Henderson C."/>
            <person name="O'Brien R."/>
            <person name="Bibel M."/>
            <person name="Schiess R."/>
            <person name="Aebersold R."/>
            <person name="Watts J.D."/>
        </authorList>
    </citation>
    <scope>GLYCOSYLATION [LARGE SCALE ANALYSIS] AT ASN-202; ASN-286 AND ASN-332</scope>
</reference>
<reference key="15">
    <citation type="journal article" date="2010" name="Cell">
        <title>A tissue-specific atlas of mouse protein phosphorylation and expression.</title>
        <authorList>
            <person name="Huttlin E.L."/>
            <person name="Jedrychowski M.P."/>
            <person name="Elias J.E."/>
            <person name="Goswami T."/>
            <person name="Rad R."/>
            <person name="Beausoleil S.A."/>
            <person name="Villen J."/>
            <person name="Haas W."/>
            <person name="Sowa M.E."/>
            <person name="Gygi S.P."/>
        </authorList>
    </citation>
    <scope>PHOSPHORYLATION [LARGE SCALE ANALYSIS] AT SER-421; SER-433; TYR-435 AND SER-509</scope>
    <scope>IDENTIFICATION BY MASS SPECTROMETRY [LARGE SCALE ANALYSIS]</scope>
    <source>
        <tissue>Brain</tissue>
        <tissue>Kidney</tissue>
        <tissue>Lung</tissue>
    </source>
</reference>
<reference key="16">
    <citation type="journal article" date="2011" name="Science">
        <title>Nectins establish a checkerboard-like cellular pattern in the auditory epithelium.</title>
        <authorList>
            <person name="Togashi H."/>
            <person name="Kominami K."/>
            <person name="Waseda M."/>
            <person name="Komura H."/>
            <person name="Miyoshi J."/>
            <person name="Takeichi M."/>
            <person name="Takai Y."/>
        </authorList>
    </citation>
    <scope>FUNCTION</scope>
    <scope>SUBCELLULAR LOCATION</scope>
    <scope>INTERACTION WITH NECTIN3</scope>
    <scope>DISRUPTION PHENOTYPE</scope>
</reference>
<reference key="17">
    <citation type="journal article" date="2024" name="J. Vet. Med. Sci.">
        <title>Single amino acid mutation of nectin-1 provides remarkable resistance against lethal pseudorabies virus infection in mice.</title>
        <authorList>
            <person name="Tomioka Y."/>
            <person name="Takeda K."/>
            <person name="Ozaki K."/>
            <person name="Inoue H."/>
            <person name="Yamamoto S."/>
            <person name="Takeuchi T."/>
            <person name="Ono E."/>
        </authorList>
    </citation>
    <scope>FUNCTION (MICROBIAL INFECTION)</scope>
    <scope>INTERACTION WITH PSEUDORABIES VIRUS PROTEIN GLYCOPROTEIN D (MICROBIAL INFECTION)</scope>
    <scope>MUTAGENESIS OF PHE-129</scope>
</reference>
<reference key="18">
    <citation type="journal article" date="2012" name="J. Biol. Chem.">
        <title>Nectin-1 binds and signals through the fibroblast growth factor receptor.</title>
        <authorList>
            <person name="Bojesen K.B."/>
            <person name="Clausen O."/>
            <person name="Rohde K."/>
            <person name="Christensen C."/>
            <person name="Zhang L."/>
            <person name="Li S."/>
            <person name="Kohler L."/>
            <person name="Nielbo S."/>
            <person name="Nielsen J."/>
            <person name="Gjorlund M.D."/>
            <person name="Poulsen F.M."/>
            <person name="Bock E."/>
            <person name="Berezin V."/>
        </authorList>
    </citation>
    <scope>STRUCTURE BY NMR OF 241-334</scope>
    <scope>FUNCTION</scope>
    <scope>SUBUNIT</scope>
    <scope>IG-LIKE DOMAIN</scope>
    <scope>DISULFIDE BOND</scope>
</reference>
<name>NECT1_MOUSE</name>
<gene>
    <name evidence="1 15" type="primary">Nectin1</name>
    <name type="synonym">Hvec</name>
    <name type="synonym">Prr1</name>
    <name type="synonym">Pvrl1</name>
</gene>
<feature type="signal peptide" evidence="2">
    <location>
        <begin position="1"/>
        <end position="30"/>
    </location>
</feature>
<feature type="chain" id="PRO_0000015134" description="Nectin-1">
    <location>
        <begin position="31"/>
        <end position="515"/>
    </location>
</feature>
<feature type="topological domain" description="Extracellular" evidence="2">
    <location>
        <begin position="31"/>
        <end position="354"/>
    </location>
</feature>
<feature type="transmembrane region" description="Helical" evidence="2">
    <location>
        <begin position="355"/>
        <end position="375"/>
    </location>
</feature>
<feature type="topological domain" description="Cytoplasmic" evidence="2">
    <location>
        <begin position="376"/>
        <end position="515"/>
    </location>
</feature>
<feature type="domain" description="Ig-like V-type">
    <location>
        <begin position="31"/>
        <end position="141"/>
    </location>
</feature>
<feature type="domain" description="Ig-like C2-type 1">
    <location>
        <begin position="145"/>
        <end position="243"/>
    </location>
</feature>
<feature type="domain" description="Ig-like C2-type 2">
    <location>
        <begin position="247"/>
        <end position="334"/>
    </location>
</feature>
<feature type="region of interest" description="Interaction with FGFR" evidence="13">
    <location>
        <begin position="282"/>
        <end position="299"/>
    </location>
</feature>
<feature type="region of interest" description="Disordered" evidence="4">
    <location>
        <begin position="399"/>
        <end position="486"/>
    </location>
</feature>
<feature type="compositionally biased region" description="Basic and acidic residues" evidence="4">
    <location>
        <begin position="447"/>
        <end position="464"/>
    </location>
</feature>
<feature type="modified residue" description="Phosphoserine" evidence="18 19">
    <location>
        <position position="421"/>
    </location>
</feature>
<feature type="modified residue" description="Phosphoserine" evidence="17 19">
    <location>
        <position position="433"/>
    </location>
</feature>
<feature type="modified residue" description="Phosphoserine" evidence="17">
    <location>
        <position position="434"/>
    </location>
</feature>
<feature type="modified residue" description="Phosphotyrosine" evidence="19">
    <location>
        <position position="435"/>
    </location>
</feature>
<feature type="modified residue" description="Phosphoserine" evidence="19">
    <location>
        <position position="509"/>
    </location>
</feature>
<feature type="glycosylation site" description="N-linked (GlcNAc...) asparagine" evidence="2">
    <location>
        <position position="36"/>
    </location>
</feature>
<feature type="glycosylation site" description="N-linked (GlcNAc...) asparagine" evidence="2">
    <location>
        <position position="72"/>
    </location>
</feature>
<feature type="glycosylation site" description="N-linked (GlcNAc...) asparagine" evidence="2">
    <location>
        <position position="139"/>
    </location>
</feature>
<feature type="glycosylation site" description="N-linked (GlcNAc...) asparagine" evidence="10 11">
    <location>
        <position position="202"/>
    </location>
</feature>
<feature type="glycosylation site" description="N-linked (GlcNAc...) asparagine" evidence="10 11">
    <location>
        <position position="286"/>
    </location>
</feature>
<feature type="glycosylation site" description="N-linked (GlcNAc...) asparagine" evidence="2">
    <location>
        <position position="297"/>
    </location>
</feature>
<feature type="glycosylation site" description="N-linked (GlcNAc...) asparagine" evidence="10">
    <location>
        <position position="332"/>
    </location>
</feature>
<feature type="disulfide bond" evidence="3">
    <location>
        <begin position="51"/>
        <end position="124"/>
    </location>
</feature>
<feature type="disulfide bond" evidence="3">
    <location>
        <begin position="172"/>
        <end position="226"/>
    </location>
</feature>
<feature type="disulfide bond" evidence="3 13">
    <location>
        <begin position="269"/>
        <end position="316"/>
    </location>
</feature>
<feature type="mutagenesis site" description="Abolished binding to pseudorabies virus glycoprotein D; knockin mice are resistant infection by pseudorabies virus." evidence="14">
    <original>F</original>
    <variation>A</variation>
    <location>
        <position position="129"/>
    </location>
</feature>
<feature type="sequence conflict" description="In Ref. 1; AAF60333." evidence="16" ref="1">
    <original>L</original>
    <variation>P</variation>
    <location>
        <position position="138"/>
    </location>
</feature>
<feature type="sequence conflict" description="In Ref. 2; AAF76195 and 3; AAG22808." evidence="16" ref="2 3">
    <original>D</original>
    <variation>N</variation>
    <location>
        <position position="165"/>
    </location>
</feature>
<feature type="sequence conflict" description="In Ref. 2; AAF76195." evidence="16" ref="2">
    <original>P</original>
    <variation>PP</variation>
    <location>
        <position position="342"/>
    </location>
</feature>
<feature type="sequence conflict" description="In Ref. 1; AAF60333 and 2; AAF76195." evidence="16" ref="1 2">
    <original>G</original>
    <variation>S</variation>
    <location>
        <position position="428"/>
    </location>
</feature>
<feature type="strand" evidence="21">
    <location>
        <begin position="33"/>
        <end position="42"/>
    </location>
</feature>
<feature type="strand" evidence="21">
    <location>
        <begin position="47"/>
        <end position="49"/>
    </location>
</feature>
<feature type="strand" evidence="21">
    <location>
        <begin position="61"/>
        <end position="70"/>
    </location>
</feature>
<feature type="strand" evidence="21">
    <location>
        <begin position="75"/>
        <end position="82"/>
    </location>
</feature>
<feature type="turn" evidence="21">
    <location>
        <begin position="83"/>
        <end position="85"/>
    </location>
</feature>
<feature type="strand" evidence="21">
    <location>
        <begin position="86"/>
        <end position="89"/>
    </location>
</feature>
<feature type="turn" evidence="21">
    <location>
        <begin position="94"/>
        <end position="96"/>
    </location>
</feature>
<feature type="strand" evidence="21">
    <location>
        <begin position="97"/>
        <end position="101"/>
    </location>
</feature>
<feature type="strand" evidence="21">
    <location>
        <begin position="109"/>
        <end position="111"/>
    </location>
</feature>
<feature type="helix" evidence="21">
    <location>
        <begin position="116"/>
        <end position="118"/>
    </location>
</feature>
<feature type="strand" evidence="21">
    <location>
        <begin position="120"/>
        <end position="129"/>
    </location>
</feature>
<feature type="strand" evidence="21">
    <location>
        <begin position="132"/>
        <end position="143"/>
    </location>
</feature>
<feature type="strand" evidence="20">
    <location>
        <begin position="248"/>
        <end position="253"/>
    </location>
</feature>
<feature type="strand" evidence="20">
    <location>
        <begin position="267"/>
        <end position="272"/>
    </location>
</feature>
<feature type="strand" evidence="20">
    <location>
        <begin position="278"/>
        <end position="284"/>
    </location>
</feature>
<feature type="strand" evidence="20">
    <location>
        <begin position="293"/>
        <end position="296"/>
    </location>
</feature>
<feature type="strand" evidence="20">
    <location>
        <begin position="299"/>
        <end position="305"/>
    </location>
</feature>
<feature type="helix" evidence="20">
    <location>
        <begin position="308"/>
        <end position="310"/>
    </location>
</feature>
<feature type="strand" evidence="20">
    <location>
        <begin position="312"/>
        <end position="320"/>
    </location>
</feature>
<feature type="strand" evidence="20">
    <location>
        <begin position="323"/>
        <end position="331"/>
    </location>
</feature>